<accession>O28832</accession>
<comment type="function">
    <text evidence="1">Allows the formation of correctly charged Gln-tRNA(Gln) through the transamidation of misacylated Glu-tRNA(Gln) in organisms which lack glutaminyl-tRNA synthetase. The reaction takes place in the presence of glutamine and ATP through an activated gamma-phospho-Glu-tRNA(Gln). The GatDE system is specific for glutamate and does not act on aspartate.</text>
</comment>
<comment type="catalytic activity">
    <reaction evidence="1">
        <text>L-glutamyl-tRNA(Gln) + L-glutamine + ATP + H2O = L-glutaminyl-tRNA(Gln) + L-glutamate + ADP + phosphate + H(+)</text>
        <dbReference type="Rhea" id="RHEA:17521"/>
        <dbReference type="Rhea" id="RHEA-COMP:9681"/>
        <dbReference type="Rhea" id="RHEA-COMP:9684"/>
        <dbReference type="ChEBI" id="CHEBI:15377"/>
        <dbReference type="ChEBI" id="CHEBI:15378"/>
        <dbReference type="ChEBI" id="CHEBI:29985"/>
        <dbReference type="ChEBI" id="CHEBI:30616"/>
        <dbReference type="ChEBI" id="CHEBI:43474"/>
        <dbReference type="ChEBI" id="CHEBI:58359"/>
        <dbReference type="ChEBI" id="CHEBI:78520"/>
        <dbReference type="ChEBI" id="CHEBI:78521"/>
        <dbReference type="ChEBI" id="CHEBI:456216"/>
    </reaction>
</comment>
<comment type="subunit">
    <text evidence="1">Heterodimer of GatD and GatE.</text>
</comment>
<comment type="similarity">
    <text evidence="1">Belongs to the GatB/GatE family. GatE subfamily.</text>
</comment>
<keyword id="KW-0067">ATP-binding</keyword>
<keyword id="KW-0436">Ligase</keyword>
<keyword id="KW-0547">Nucleotide-binding</keyword>
<keyword id="KW-0648">Protein biosynthesis</keyword>
<keyword id="KW-1185">Reference proteome</keyword>
<feature type="chain" id="PRO_0000140069" description="Glutamyl-tRNA(Gln) amidotransferase subunit E">
    <location>
        <begin position="1"/>
        <end position="613"/>
    </location>
</feature>
<reference key="1">
    <citation type="journal article" date="1997" name="Nature">
        <title>The complete genome sequence of the hyperthermophilic, sulphate-reducing archaeon Archaeoglobus fulgidus.</title>
        <authorList>
            <person name="Klenk H.-P."/>
            <person name="Clayton R.A."/>
            <person name="Tomb J.-F."/>
            <person name="White O."/>
            <person name="Nelson K.E."/>
            <person name="Ketchum K.A."/>
            <person name="Dodson R.J."/>
            <person name="Gwinn M.L."/>
            <person name="Hickey E.K."/>
            <person name="Peterson J.D."/>
            <person name="Richardson D.L."/>
            <person name="Kerlavage A.R."/>
            <person name="Graham D.E."/>
            <person name="Kyrpides N.C."/>
            <person name="Fleischmann R.D."/>
            <person name="Quackenbush J."/>
            <person name="Lee N.H."/>
            <person name="Sutton G.G."/>
            <person name="Gill S.R."/>
            <person name="Kirkness E.F."/>
            <person name="Dougherty B.A."/>
            <person name="McKenney K."/>
            <person name="Adams M.D."/>
            <person name="Loftus B.J."/>
            <person name="Peterson S.N."/>
            <person name="Reich C.I."/>
            <person name="McNeil L.K."/>
            <person name="Badger J.H."/>
            <person name="Glodek A."/>
            <person name="Zhou L."/>
            <person name="Overbeek R."/>
            <person name="Gocayne J.D."/>
            <person name="Weidman J.F."/>
            <person name="McDonald L.A."/>
            <person name="Utterback T.R."/>
            <person name="Cotton M.D."/>
            <person name="Spriggs T."/>
            <person name="Artiach P."/>
            <person name="Kaine B.P."/>
            <person name="Sykes S.M."/>
            <person name="Sadow P.W."/>
            <person name="D'Andrea K.P."/>
            <person name="Bowman C."/>
            <person name="Fujii C."/>
            <person name="Garland S.A."/>
            <person name="Mason T.M."/>
            <person name="Olsen G.J."/>
            <person name="Fraser C.M."/>
            <person name="Smith H.O."/>
            <person name="Woese C.R."/>
            <person name="Venter J.C."/>
        </authorList>
    </citation>
    <scope>NUCLEOTIDE SEQUENCE [LARGE SCALE GENOMIC DNA]</scope>
    <source>
        <strain>ATCC 49558 / DSM 4304 / JCM 9628 / NBRC 100126 / VC-16</strain>
    </source>
</reference>
<protein>
    <recommendedName>
        <fullName evidence="1">Glutamyl-tRNA(Gln) amidotransferase subunit E</fullName>
        <shortName evidence="1">Glu-ADT subunit E</shortName>
        <ecNumber evidence="1">6.3.5.-</ecNumber>
    </recommendedName>
</protein>
<sequence length="613" mass="69024">MMDYKKLGLKVGIEIHQQLDTKHKLFCLCPTLTREVEESNFEFFRYLRLKRSEIGEEDRAAKEEVERSRRFIYKYYDTTCLVEADEEPPREVNREALLIAIQVAKMLNMEVVDEVHVMRKIVIDGSNTTGFQRTALVAFGGFLEVDGKRVGVATLCLEEEACRKVEDGEGYAVYSLDRLGIPLVEIGTEPDIDSPEMAKKVAARLGMILRSTGKVKRGLGTIRQDVNISIRDGARVEIKGVQELDILDKIVEYEVLRQVNLLKIREELKQRGARVEEKVFDVTDVFSNTKSKIIRNKTVKAILLRGFGGIVGREIQPGRRLGTEFADIAKTYGLGGVFHTDELPAYGISEEEVSRLRDAVGAEDGDAVVMAAGDAVRVERALRRIIERAKHCLVGVPEETRKANEDGTTSYLRPLPGAARMYPETDVPPVVVTEEMLNVEIPELIEERARRYEKLLPKDLAWEIADSPYYRVFEEYSEKLQPTVVARVLYLAPAALRREGVEIERLEERHYRLVLDMVLRGDIAKEGAEEALKLLCQNPEMSAGQLKEKIGAAEDIDGFIAKLIEEKADLIAERGEGAFKPLMGLVMKEFRGKVDGKVVAEKLKKALKSALSQ</sequence>
<name>GATE_ARCFU</name>
<organism>
    <name type="scientific">Archaeoglobus fulgidus (strain ATCC 49558 / DSM 4304 / JCM 9628 / NBRC 100126 / VC-16)</name>
    <dbReference type="NCBI Taxonomy" id="224325"/>
    <lineage>
        <taxon>Archaea</taxon>
        <taxon>Methanobacteriati</taxon>
        <taxon>Methanobacteriota</taxon>
        <taxon>Archaeoglobi</taxon>
        <taxon>Archaeoglobales</taxon>
        <taxon>Archaeoglobaceae</taxon>
        <taxon>Archaeoglobus</taxon>
    </lineage>
</organism>
<dbReference type="EC" id="6.3.5.-" evidence="1"/>
<dbReference type="EMBL" id="AE000782">
    <property type="protein sequence ID" value="AAB89807.1"/>
    <property type="molecule type" value="Genomic_DNA"/>
</dbReference>
<dbReference type="PIR" id="G69429">
    <property type="entry name" value="G69429"/>
</dbReference>
<dbReference type="RefSeq" id="WP_010878937.1">
    <property type="nucleotide sequence ID" value="NC_000917.1"/>
</dbReference>
<dbReference type="SMR" id="O28832"/>
<dbReference type="STRING" id="224325.AF_1440"/>
<dbReference type="PaxDb" id="224325-AF_1440"/>
<dbReference type="EnsemblBacteria" id="AAB89807">
    <property type="protein sequence ID" value="AAB89807"/>
    <property type="gene ID" value="AF_1440"/>
</dbReference>
<dbReference type="GeneID" id="1484664"/>
<dbReference type="KEGG" id="afu:AF_1440"/>
<dbReference type="eggNOG" id="arCOG01719">
    <property type="taxonomic scope" value="Archaea"/>
</dbReference>
<dbReference type="HOGENOM" id="CLU_030702_0_0_2"/>
<dbReference type="OrthoDB" id="7316at2157"/>
<dbReference type="PhylomeDB" id="O28832"/>
<dbReference type="Proteomes" id="UP000002199">
    <property type="component" value="Chromosome"/>
</dbReference>
<dbReference type="GO" id="GO:0005737">
    <property type="term" value="C:cytoplasm"/>
    <property type="evidence" value="ECO:0007669"/>
    <property type="project" value="InterPro"/>
</dbReference>
<dbReference type="GO" id="GO:0004812">
    <property type="term" value="F:aminoacyl-tRNA ligase activity"/>
    <property type="evidence" value="ECO:0007669"/>
    <property type="project" value="InterPro"/>
</dbReference>
<dbReference type="GO" id="GO:0005524">
    <property type="term" value="F:ATP binding"/>
    <property type="evidence" value="ECO:0007669"/>
    <property type="project" value="UniProtKB-KW"/>
</dbReference>
<dbReference type="GO" id="GO:0050567">
    <property type="term" value="F:glutaminyl-tRNA synthase (glutamine-hydrolyzing) activity"/>
    <property type="evidence" value="ECO:0007669"/>
    <property type="project" value="UniProtKB-UniRule"/>
</dbReference>
<dbReference type="GO" id="GO:0070681">
    <property type="term" value="P:glutaminyl-tRNAGln biosynthesis via transamidation"/>
    <property type="evidence" value="ECO:0007669"/>
    <property type="project" value="TreeGrafter"/>
</dbReference>
<dbReference type="GO" id="GO:0006412">
    <property type="term" value="P:translation"/>
    <property type="evidence" value="ECO:0007669"/>
    <property type="project" value="UniProtKB-UniRule"/>
</dbReference>
<dbReference type="Gene3D" id="1.10.10.410">
    <property type="match status" value="1"/>
</dbReference>
<dbReference type="Gene3D" id="3.30.1360.30">
    <property type="entry name" value="GAD-like domain"/>
    <property type="match status" value="1"/>
</dbReference>
<dbReference type="Gene3D" id="1.10.150.380">
    <property type="entry name" value="GatB domain, N-terminal subdomain"/>
    <property type="match status" value="1"/>
</dbReference>
<dbReference type="HAMAP" id="MF_00588">
    <property type="entry name" value="GatE"/>
    <property type="match status" value="1"/>
</dbReference>
<dbReference type="InterPro" id="IPR017959">
    <property type="entry name" value="Asn/Gln-tRNA_amidoTrfase_suB/E"/>
</dbReference>
<dbReference type="InterPro" id="IPR006075">
    <property type="entry name" value="Asn/Gln-tRNA_Trfase_suB/E_cat"/>
</dbReference>
<dbReference type="InterPro" id="IPR018027">
    <property type="entry name" value="Asn/Gln_amidotransferase"/>
</dbReference>
<dbReference type="InterPro" id="IPR003789">
    <property type="entry name" value="Asn/Gln_tRNA_amidoTrase-B-like"/>
</dbReference>
<dbReference type="InterPro" id="IPR004115">
    <property type="entry name" value="GAD-like_sf"/>
</dbReference>
<dbReference type="InterPro" id="IPR029351">
    <property type="entry name" value="GAD_dom"/>
</dbReference>
<dbReference type="InterPro" id="IPR042114">
    <property type="entry name" value="GatB_C_1"/>
</dbReference>
<dbReference type="InterPro" id="IPR023168">
    <property type="entry name" value="GatB_Yqey_C_2"/>
</dbReference>
<dbReference type="InterPro" id="IPR004414">
    <property type="entry name" value="GatE"/>
</dbReference>
<dbReference type="InterPro" id="IPR017958">
    <property type="entry name" value="Gln-tRNA_amidoTrfase_suB_CS"/>
</dbReference>
<dbReference type="InterPro" id="IPR014746">
    <property type="entry name" value="Gln_synth/guanido_kin_cat_dom"/>
</dbReference>
<dbReference type="NCBIfam" id="TIGR00134">
    <property type="entry name" value="gatE_arch"/>
    <property type="match status" value="1"/>
</dbReference>
<dbReference type="NCBIfam" id="NF003107">
    <property type="entry name" value="PRK04028.1"/>
    <property type="match status" value="1"/>
</dbReference>
<dbReference type="PANTHER" id="PTHR11659">
    <property type="entry name" value="GLUTAMYL-TRNA GLN AMIDOTRANSFERASE SUBUNIT B MITOCHONDRIAL AND PROKARYOTIC PET112-RELATED"/>
    <property type="match status" value="1"/>
</dbReference>
<dbReference type="PANTHER" id="PTHR11659:SF2">
    <property type="entry name" value="GLUTAMYL-TRNA(GLN) AMIDOTRANSFERASE SUBUNIT E"/>
    <property type="match status" value="1"/>
</dbReference>
<dbReference type="Pfam" id="PF02938">
    <property type="entry name" value="GAD"/>
    <property type="match status" value="1"/>
</dbReference>
<dbReference type="Pfam" id="PF02934">
    <property type="entry name" value="GatB_N"/>
    <property type="match status" value="1"/>
</dbReference>
<dbReference type="Pfam" id="PF02637">
    <property type="entry name" value="GatB_Yqey"/>
    <property type="match status" value="1"/>
</dbReference>
<dbReference type="SMART" id="SM00845">
    <property type="entry name" value="GatB_Yqey"/>
    <property type="match status" value="1"/>
</dbReference>
<dbReference type="SUPFAM" id="SSF55261">
    <property type="entry name" value="GAD domain-like"/>
    <property type="match status" value="1"/>
</dbReference>
<dbReference type="SUPFAM" id="SSF89095">
    <property type="entry name" value="GatB/YqeY motif"/>
    <property type="match status" value="1"/>
</dbReference>
<dbReference type="SUPFAM" id="SSF55931">
    <property type="entry name" value="Glutamine synthetase/guanido kinase"/>
    <property type="match status" value="1"/>
</dbReference>
<dbReference type="PROSITE" id="PS01234">
    <property type="entry name" value="GATB"/>
    <property type="match status" value="1"/>
</dbReference>
<proteinExistence type="inferred from homology"/>
<gene>
    <name evidence="1" type="primary">gatE</name>
    <name type="ordered locus">AF_1440</name>
</gene>
<evidence type="ECO:0000255" key="1">
    <source>
        <dbReference type="HAMAP-Rule" id="MF_00588"/>
    </source>
</evidence>